<accession>A6VFZ9</accession>
<proteinExistence type="inferred from homology"/>
<keyword id="KW-0963">Cytoplasm</keyword>
<keyword id="KW-0378">Hydrolase</keyword>
<keyword id="KW-0479">Metal-binding</keyword>
<keyword id="KW-0547">Nucleotide-binding</keyword>
<comment type="function">
    <text evidence="1">Nucleotidase that shows phosphatase activity on nucleoside 5'-monophosphates.</text>
</comment>
<comment type="catalytic activity">
    <reaction evidence="1">
        <text>a ribonucleoside 5'-phosphate + H2O = a ribonucleoside + phosphate</text>
        <dbReference type="Rhea" id="RHEA:12484"/>
        <dbReference type="ChEBI" id="CHEBI:15377"/>
        <dbReference type="ChEBI" id="CHEBI:18254"/>
        <dbReference type="ChEBI" id="CHEBI:43474"/>
        <dbReference type="ChEBI" id="CHEBI:58043"/>
        <dbReference type="EC" id="3.1.3.5"/>
    </reaction>
</comment>
<comment type="cofactor">
    <cofactor evidence="1">
        <name>a divalent metal cation</name>
        <dbReference type="ChEBI" id="CHEBI:60240"/>
    </cofactor>
    <text evidence="1">Binds 1 divalent metal cation per subunit.</text>
</comment>
<comment type="subcellular location">
    <subcellularLocation>
        <location evidence="1">Cytoplasm</location>
    </subcellularLocation>
</comment>
<comment type="similarity">
    <text evidence="1">Belongs to the SurE nucleotidase family.</text>
</comment>
<dbReference type="EC" id="3.1.3.5" evidence="1"/>
<dbReference type="EMBL" id="CP000745">
    <property type="protein sequence ID" value="ABR65375.1"/>
    <property type="molecule type" value="Genomic_DNA"/>
</dbReference>
<dbReference type="SMR" id="A6VFZ9"/>
<dbReference type="STRING" id="426368.MmarC7_0305"/>
<dbReference type="KEGG" id="mmz:MmarC7_0305"/>
<dbReference type="eggNOG" id="arCOG02303">
    <property type="taxonomic scope" value="Archaea"/>
</dbReference>
<dbReference type="HOGENOM" id="CLU_045192_1_3_2"/>
<dbReference type="OrthoDB" id="26873at2157"/>
<dbReference type="GO" id="GO:0005737">
    <property type="term" value="C:cytoplasm"/>
    <property type="evidence" value="ECO:0007669"/>
    <property type="project" value="UniProtKB-SubCell"/>
</dbReference>
<dbReference type="GO" id="GO:0008253">
    <property type="term" value="F:5'-nucleotidase activity"/>
    <property type="evidence" value="ECO:0007669"/>
    <property type="project" value="UniProtKB-UniRule"/>
</dbReference>
<dbReference type="GO" id="GO:0046872">
    <property type="term" value="F:metal ion binding"/>
    <property type="evidence" value="ECO:0007669"/>
    <property type="project" value="UniProtKB-UniRule"/>
</dbReference>
<dbReference type="GO" id="GO:0000166">
    <property type="term" value="F:nucleotide binding"/>
    <property type="evidence" value="ECO:0007669"/>
    <property type="project" value="UniProtKB-KW"/>
</dbReference>
<dbReference type="Gene3D" id="3.40.1210.10">
    <property type="entry name" value="Survival protein SurE-like phosphatase/nucleotidase"/>
    <property type="match status" value="1"/>
</dbReference>
<dbReference type="HAMAP" id="MF_00060">
    <property type="entry name" value="SurE"/>
    <property type="match status" value="1"/>
</dbReference>
<dbReference type="InterPro" id="IPR030048">
    <property type="entry name" value="SurE"/>
</dbReference>
<dbReference type="InterPro" id="IPR002828">
    <property type="entry name" value="SurE-like_Pase/nucleotidase"/>
</dbReference>
<dbReference type="InterPro" id="IPR036523">
    <property type="entry name" value="SurE-like_sf"/>
</dbReference>
<dbReference type="NCBIfam" id="NF001491">
    <property type="entry name" value="PRK00346.2-1"/>
    <property type="match status" value="1"/>
</dbReference>
<dbReference type="NCBIfam" id="TIGR00087">
    <property type="entry name" value="surE"/>
    <property type="match status" value="1"/>
</dbReference>
<dbReference type="PANTHER" id="PTHR30457">
    <property type="entry name" value="5'-NUCLEOTIDASE SURE"/>
    <property type="match status" value="1"/>
</dbReference>
<dbReference type="PANTHER" id="PTHR30457:SF0">
    <property type="entry name" value="PHOSPHATASE, PUTATIVE (AFU_ORTHOLOGUE AFUA_4G01070)-RELATED"/>
    <property type="match status" value="1"/>
</dbReference>
<dbReference type="Pfam" id="PF01975">
    <property type="entry name" value="SurE"/>
    <property type="match status" value="1"/>
</dbReference>
<dbReference type="SUPFAM" id="SSF64167">
    <property type="entry name" value="SurE-like"/>
    <property type="match status" value="1"/>
</dbReference>
<organism>
    <name type="scientific">Methanococcus maripaludis (strain C7 / ATCC BAA-1331)</name>
    <dbReference type="NCBI Taxonomy" id="426368"/>
    <lineage>
        <taxon>Archaea</taxon>
        <taxon>Methanobacteriati</taxon>
        <taxon>Methanobacteriota</taxon>
        <taxon>Methanomada group</taxon>
        <taxon>Methanococci</taxon>
        <taxon>Methanococcales</taxon>
        <taxon>Methanococcaceae</taxon>
        <taxon>Methanococcus</taxon>
    </lineage>
</organism>
<reference key="1">
    <citation type="submission" date="2007-06" db="EMBL/GenBank/DDBJ databases">
        <title>Complete sequence of Methanococcus maripaludis C7.</title>
        <authorList>
            <consortium name="US DOE Joint Genome Institute"/>
            <person name="Copeland A."/>
            <person name="Lucas S."/>
            <person name="Lapidus A."/>
            <person name="Barry K."/>
            <person name="Glavina del Rio T."/>
            <person name="Dalin E."/>
            <person name="Tice H."/>
            <person name="Pitluck S."/>
            <person name="Clum A."/>
            <person name="Schmutz J."/>
            <person name="Larimer F."/>
            <person name="Land M."/>
            <person name="Hauser L."/>
            <person name="Kyrpides N."/>
            <person name="Anderson I."/>
            <person name="Sieprawska-Lupa M."/>
            <person name="Whitman W.B."/>
            <person name="Richardson P."/>
        </authorList>
    </citation>
    <scope>NUCLEOTIDE SEQUENCE [LARGE SCALE GENOMIC DNA]</scope>
    <source>
        <strain>C7 / ATCC BAA-1331</strain>
    </source>
</reference>
<evidence type="ECO:0000255" key="1">
    <source>
        <dbReference type="HAMAP-Rule" id="MF_00060"/>
    </source>
</evidence>
<name>SURE_METM7</name>
<feature type="chain" id="PRO_0000335294" description="5'-nucleotidase SurE">
    <location>
        <begin position="1"/>
        <end position="264"/>
    </location>
</feature>
<feature type="binding site" evidence="1">
    <location>
        <position position="10"/>
    </location>
    <ligand>
        <name>a divalent metal cation</name>
        <dbReference type="ChEBI" id="CHEBI:60240"/>
    </ligand>
</feature>
<feature type="binding site" evidence="1">
    <location>
        <position position="11"/>
    </location>
    <ligand>
        <name>a divalent metal cation</name>
        <dbReference type="ChEBI" id="CHEBI:60240"/>
    </ligand>
</feature>
<feature type="binding site" evidence="1">
    <location>
        <position position="43"/>
    </location>
    <ligand>
        <name>a divalent metal cation</name>
        <dbReference type="ChEBI" id="CHEBI:60240"/>
    </ligand>
</feature>
<feature type="binding site" evidence="1">
    <location>
        <position position="99"/>
    </location>
    <ligand>
        <name>a divalent metal cation</name>
        <dbReference type="ChEBI" id="CHEBI:60240"/>
    </ligand>
</feature>
<sequence>MTMEILLVNDDGIYSNGLLALKNVIGEEFDANVTVVAPTNQQSGIGRAISLFEPLRITKTKLADCSEGYAVSGTPTDCVVLGIHQVLKKVPDYVISGINIGENLGTEITTSGTLGAAFEGAHHGAKALACSLQVTMDHLKFKEGESPIEFLTTARIVKNVFKKFLGDEFPCDVVNINVPDNATENTPVEITKLAKRMYSMHVEERIDPRSRSYYWLDGYPVMDEEDGTDVYAVRNKRNVSVTPLTLDNTAKNLDEFKEKYAKKF</sequence>
<protein>
    <recommendedName>
        <fullName evidence="1">5'-nucleotidase SurE</fullName>
        <ecNumber evidence="1">3.1.3.5</ecNumber>
    </recommendedName>
    <alternativeName>
        <fullName evidence="1">Nucleoside 5'-monophosphate phosphohydrolase</fullName>
    </alternativeName>
</protein>
<gene>
    <name evidence="1" type="primary">surE</name>
    <name type="ordered locus">MmarC7_0305</name>
</gene>